<organism>
    <name type="scientific">Mycobacterium avium (strain 104)</name>
    <dbReference type="NCBI Taxonomy" id="243243"/>
    <lineage>
        <taxon>Bacteria</taxon>
        <taxon>Bacillati</taxon>
        <taxon>Actinomycetota</taxon>
        <taxon>Actinomycetes</taxon>
        <taxon>Mycobacteriales</taxon>
        <taxon>Mycobacteriaceae</taxon>
        <taxon>Mycobacterium</taxon>
        <taxon>Mycobacterium avium complex (MAC)</taxon>
    </lineage>
</organism>
<sequence>MTRTDQDSWDLASSVGATATMVAAARALASTGERPIINDPFAAPLVRAVGLDFFRRLVDGEVAPADPQRGERDLQLETDSIAVRTRFFDDFFTGAARDGIRQSVILAAGLDARAYRLDWPAGAVVYEVDQPKVVEFKTNTMAALDARPAAQLRTVSIDLREDWPEALRANGFDVTQATSWSAEGLLMYLPPEAQDRLFDNITALSAPGSRLATEYHPDATGTTMAQRAQEFNDRWARVGCDIDLSGLFFDGERSNVVEYLTGRGWRVSARPRRDLFDDYGLAYPEDDETAQFPNIVAVSAELG</sequence>
<gene>
    <name type="ordered locus">MAV_4435</name>
</gene>
<protein>
    <recommendedName>
        <fullName>Putative S-adenosyl-L-methionine-dependent methyltransferase MAV_4435</fullName>
        <ecNumber>2.1.1.-</ecNumber>
    </recommendedName>
</protein>
<evidence type="ECO:0000250" key="1"/>
<evidence type="ECO:0000305" key="2"/>
<name>Y4435_MYCA1</name>
<feature type="chain" id="PRO_0000361107" description="Putative S-adenosyl-L-methionine-dependent methyltransferase MAV_4435">
    <location>
        <begin position="1"/>
        <end position="303"/>
    </location>
</feature>
<feature type="binding site" evidence="1">
    <location>
        <position position="129"/>
    </location>
    <ligand>
        <name>S-adenosyl-L-methionine</name>
        <dbReference type="ChEBI" id="CHEBI:59789"/>
    </ligand>
</feature>
<feature type="binding site" evidence="1">
    <location>
        <begin position="158"/>
        <end position="159"/>
    </location>
    <ligand>
        <name>S-adenosyl-L-methionine</name>
        <dbReference type="ChEBI" id="CHEBI:59789"/>
    </ligand>
</feature>
<accession>A0QKY2</accession>
<reference key="1">
    <citation type="submission" date="2006-10" db="EMBL/GenBank/DDBJ databases">
        <authorList>
            <person name="Fleischmann R.D."/>
            <person name="Dodson R.J."/>
            <person name="Haft D.H."/>
            <person name="Merkel J.S."/>
            <person name="Nelson W.C."/>
            <person name="Fraser C.M."/>
        </authorList>
    </citation>
    <scope>NUCLEOTIDE SEQUENCE [LARGE SCALE GENOMIC DNA]</scope>
    <source>
        <strain>104</strain>
    </source>
</reference>
<proteinExistence type="inferred from homology"/>
<keyword id="KW-0489">Methyltransferase</keyword>
<keyword id="KW-0949">S-adenosyl-L-methionine</keyword>
<keyword id="KW-0808">Transferase</keyword>
<dbReference type="EC" id="2.1.1.-"/>
<dbReference type="EMBL" id="CP000479">
    <property type="protein sequence ID" value="ABK67851.1"/>
    <property type="molecule type" value="Genomic_DNA"/>
</dbReference>
<dbReference type="RefSeq" id="WP_009979041.1">
    <property type="nucleotide sequence ID" value="NC_008595.1"/>
</dbReference>
<dbReference type="SMR" id="A0QKY2"/>
<dbReference type="KEGG" id="mav:MAV_4435"/>
<dbReference type="HOGENOM" id="CLU_056160_2_1_11"/>
<dbReference type="Proteomes" id="UP000001574">
    <property type="component" value="Chromosome"/>
</dbReference>
<dbReference type="GO" id="GO:0008168">
    <property type="term" value="F:methyltransferase activity"/>
    <property type="evidence" value="ECO:0007669"/>
    <property type="project" value="UniProtKB-KW"/>
</dbReference>
<dbReference type="GO" id="GO:0032259">
    <property type="term" value="P:methylation"/>
    <property type="evidence" value="ECO:0007669"/>
    <property type="project" value="UniProtKB-KW"/>
</dbReference>
<dbReference type="Gene3D" id="3.40.50.150">
    <property type="entry name" value="Vaccinia Virus protein VP39"/>
    <property type="match status" value="1"/>
</dbReference>
<dbReference type="InterPro" id="IPR007213">
    <property type="entry name" value="Ppm1/Ppm2/Tcmp"/>
</dbReference>
<dbReference type="InterPro" id="IPR029063">
    <property type="entry name" value="SAM-dependent_MTases_sf"/>
</dbReference>
<dbReference type="InterPro" id="IPR011610">
    <property type="entry name" value="SAM_mthyl_Trfase_ML2640-like"/>
</dbReference>
<dbReference type="NCBIfam" id="TIGR00027">
    <property type="entry name" value="mthyl_TIGR00027"/>
    <property type="match status" value="1"/>
</dbReference>
<dbReference type="PANTHER" id="PTHR43619">
    <property type="entry name" value="S-ADENOSYL-L-METHIONINE-DEPENDENT METHYLTRANSFERASE YKTD-RELATED"/>
    <property type="match status" value="1"/>
</dbReference>
<dbReference type="PANTHER" id="PTHR43619:SF2">
    <property type="entry name" value="S-ADENOSYL-L-METHIONINE-DEPENDENT METHYLTRANSFERASES SUPERFAMILY PROTEIN"/>
    <property type="match status" value="1"/>
</dbReference>
<dbReference type="Pfam" id="PF04072">
    <property type="entry name" value="LCM"/>
    <property type="match status" value="1"/>
</dbReference>
<dbReference type="SUPFAM" id="SSF53335">
    <property type="entry name" value="S-adenosyl-L-methionine-dependent methyltransferases"/>
    <property type="match status" value="1"/>
</dbReference>
<comment type="function">
    <text evidence="1">Exhibits S-adenosyl-L-methionine-dependent methyltransferase activity.</text>
</comment>
<comment type="similarity">
    <text evidence="2">Belongs to the UPF0677 family.</text>
</comment>